<feature type="chain" id="PRO_1000135838" description="3-isopropylmalate dehydratase small subunit">
    <location>
        <begin position="1"/>
        <end position="215"/>
    </location>
</feature>
<dbReference type="EC" id="4.2.1.33" evidence="1"/>
<dbReference type="EMBL" id="CP000967">
    <property type="protein sequence ID" value="ACD60895.1"/>
    <property type="molecule type" value="Genomic_DNA"/>
</dbReference>
<dbReference type="RefSeq" id="WP_011257807.1">
    <property type="nucleotide sequence ID" value="NC_010717.2"/>
</dbReference>
<dbReference type="SMR" id="B2SNH3"/>
<dbReference type="KEGG" id="xop:PXO_02612"/>
<dbReference type="eggNOG" id="COG0066">
    <property type="taxonomic scope" value="Bacteria"/>
</dbReference>
<dbReference type="HOGENOM" id="CLU_081378_0_3_6"/>
<dbReference type="UniPathway" id="UPA00048">
    <property type="reaction ID" value="UER00071"/>
</dbReference>
<dbReference type="PHI-base" id="PHI:9980"/>
<dbReference type="Proteomes" id="UP000001740">
    <property type="component" value="Chromosome"/>
</dbReference>
<dbReference type="GO" id="GO:0009316">
    <property type="term" value="C:3-isopropylmalate dehydratase complex"/>
    <property type="evidence" value="ECO:0007669"/>
    <property type="project" value="InterPro"/>
</dbReference>
<dbReference type="GO" id="GO:0003861">
    <property type="term" value="F:3-isopropylmalate dehydratase activity"/>
    <property type="evidence" value="ECO:0007669"/>
    <property type="project" value="UniProtKB-UniRule"/>
</dbReference>
<dbReference type="GO" id="GO:0009098">
    <property type="term" value="P:L-leucine biosynthetic process"/>
    <property type="evidence" value="ECO:0007669"/>
    <property type="project" value="UniProtKB-UniRule"/>
</dbReference>
<dbReference type="CDD" id="cd01577">
    <property type="entry name" value="IPMI_Swivel"/>
    <property type="match status" value="1"/>
</dbReference>
<dbReference type="FunFam" id="3.20.19.10:FF:000003">
    <property type="entry name" value="3-isopropylmalate dehydratase small subunit"/>
    <property type="match status" value="1"/>
</dbReference>
<dbReference type="Gene3D" id="3.20.19.10">
    <property type="entry name" value="Aconitase, domain 4"/>
    <property type="match status" value="1"/>
</dbReference>
<dbReference type="HAMAP" id="MF_01031">
    <property type="entry name" value="LeuD_type1"/>
    <property type="match status" value="1"/>
</dbReference>
<dbReference type="InterPro" id="IPR004431">
    <property type="entry name" value="3-IsopropMal_deHydase_ssu"/>
</dbReference>
<dbReference type="InterPro" id="IPR015928">
    <property type="entry name" value="Aconitase/3IPM_dehydase_swvl"/>
</dbReference>
<dbReference type="InterPro" id="IPR000573">
    <property type="entry name" value="AconitaseA/IPMdHydase_ssu_swvl"/>
</dbReference>
<dbReference type="InterPro" id="IPR033940">
    <property type="entry name" value="IPMI_Swivel"/>
</dbReference>
<dbReference type="InterPro" id="IPR050075">
    <property type="entry name" value="LeuD"/>
</dbReference>
<dbReference type="NCBIfam" id="TIGR00171">
    <property type="entry name" value="leuD"/>
    <property type="match status" value="1"/>
</dbReference>
<dbReference type="NCBIfam" id="NF002458">
    <property type="entry name" value="PRK01641.1"/>
    <property type="match status" value="1"/>
</dbReference>
<dbReference type="PANTHER" id="PTHR43345:SF5">
    <property type="entry name" value="3-ISOPROPYLMALATE DEHYDRATASE SMALL SUBUNIT"/>
    <property type="match status" value="1"/>
</dbReference>
<dbReference type="PANTHER" id="PTHR43345">
    <property type="entry name" value="3-ISOPROPYLMALATE DEHYDRATASE SMALL SUBUNIT 2-RELATED-RELATED"/>
    <property type="match status" value="1"/>
</dbReference>
<dbReference type="Pfam" id="PF00694">
    <property type="entry name" value="Aconitase_C"/>
    <property type="match status" value="1"/>
</dbReference>
<dbReference type="SUPFAM" id="SSF52016">
    <property type="entry name" value="LeuD/IlvD-like"/>
    <property type="match status" value="1"/>
</dbReference>
<evidence type="ECO:0000255" key="1">
    <source>
        <dbReference type="HAMAP-Rule" id="MF_01031"/>
    </source>
</evidence>
<proteinExistence type="inferred from homology"/>
<comment type="function">
    <text evidence="1">Catalyzes the isomerization between 2-isopropylmalate and 3-isopropylmalate, via the formation of 2-isopropylmaleate.</text>
</comment>
<comment type="catalytic activity">
    <reaction evidence="1">
        <text>(2R,3S)-3-isopropylmalate = (2S)-2-isopropylmalate</text>
        <dbReference type="Rhea" id="RHEA:32287"/>
        <dbReference type="ChEBI" id="CHEBI:1178"/>
        <dbReference type="ChEBI" id="CHEBI:35121"/>
        <dbReference type="EC" id="4.2.1.33"/>
    </reaction>
</comment>
<comment type="pathway">
    <text evidence="1">Amino-acid biosynthesis; L-leucine biosynthesis; L-leucine from 3-methyl-2-oxobutanoate: step 2/4.</text>
</comment>
<comment type="subunit">
    <text evidence="1">Heterodimer of LeuC and LeuD.</text>
</comment>
<comment type="similarity">
    <text evidence="1">Belongs to the LeuD family. LeuD type 1 subfamily.</text>
</comment>
<keyword id="KW-0028">Amino-acid biosynthesis</keyword>
<keyword id="KW-0100">Branched-chain amino acid biosynthesis</keyword>
<keyword id="KW-0432">Leucine biosynthesis</keyword>
<keyword id="KW-0456">Lyase</keyword>
<reference key="1">
    <citation type="journal article" date="2008" name="BMC Genomics">
        <title>Genome sequence and rapid evolution of the rice pathogen Xanthomonas oryzae pv. oryzae PXO99A.</title>
        <authorList>
            <person name="Salzberg S.L."/>
            <person name="Sommer D.D."/>
            <person name="Schatz M.C."/>
            <person name="Phillippy A.M."/>
            <person name="Rabinowicz P.D."/>
            <person name="Tsuge S."/>
            <person name="Furutani A."/>
            <person name="Ochiai H."/>
            <person name="Delcher A.L."/>
            <person name="Kelley D."/>
            <person name="Madupu R."/>
            <person name="Puiu D."/>
            <person name="Radune D."/>
            <person name="Shumway M."/>
            <person name="Trapnell C."/>
            <person name="Aparna G."/>
            <person name="Jha G."/>
            <person name="Pandey A."/>
            <person name="Patil P.B."/>
            <person name="Ishihara H."/>
            <person name="Meyer D.F."/>
            <person name="Szurek B."/>
            <person name="Verdier V."/>
            <person name="Koebnik R."/>
            <person name="Dow J.M."/>
            <person name="Ryan R.P."/>
            <person name="Hirata H."/>
            <person name="Tsuyumu S."/>
            <person name="Won Lee S."/>
            <person name="Seo Y.-S."/>
            <person name="Sriariyanum M."/>
            <person name="Ronald P.C."/>
            <person name="Sonti R.V."/>
            <person name="Van Sluys M.-A."/>
            <person name="Leach J.E."/>
            <person name="White F.F."/>
            <person name="Bogdanove A.J."/>
        </authorList>
    </citation>
    <scope>NUCLEOTIDE SEQUENCE [LARGE SCALE GENOMIC DNA]</scope>
    <source>
        <strain>PXO99A</strain>
    </source>
</reference>
<gene>
    <name evidence="1" type="primary">leuD</name>
    <name type="ordered locus">PXO_02612</name>
</gene>
<organism>
    <name type="scientific">Xanthomonas oryzae pv. oryzae (strain PXO99A)</name>
    <dbReference type="NCBI Taxonomy" id="360094"/>
    <lineage>
        <taxon>Bacteria</taxon>
        <taxon>Pseudomonadati</taxon>
        <taxon>Pseudomonadota</taxon>
        <taxon>Gammaproteobacteria</taxon>
        <taxon>Lysobacterales</taxon>
        <taxon>Lysobacteraceae</taxon>
        <taxon>Xanthomonas</taxon>
    </lineage>
</organism>
<sequence>MTPFTQHTGLVAPLDRANVDTDQIIPKQFLKSIKRTGFGPNLFDEWRYLDIGEPGRDNSTRPLNPEFVLNFPRYQGASVLLARENFGCGSSREHAPWALDEYGFRAVIAPSFADIFYNNSFKNGLLPIVLAEAEVDALFEQCLANEGYQLTVDLAAQRVRRPDGVEYSFDIDAFRKHCLLNGLDDIGLTLQEADAIGRFEQDHRARQPWLFGALQ</sequence>
<protein>
    <recommendedName>
        <fullName evidence="1">3-isopropylmalate dehydratase small subunit</fullName>
        <ecNumber evidence="1">4.2.1.33</ecNumber>
    </recommendedName>
    <alternativeName>
        <fullName evidence="1">Alpha-IPM isomerase</fullName>
        <shortName evidence="1">IPMI</shortName>
    </alternativeName>
    <alternativeName>
        <fullName evidence="1">Isopropylmalate isomerase</fullName>
    </alternativeName>
</protein>
<name>LEUD_XANOP</name>
<accession>B2SNH3</accession>